<comment type="function">
    <text evidence="1">Hydrolyzes ribosome-free peptidyl-tRNAs (with 1 or more amino acids incorporated), which drop off the ribosome during protein synthesis, or as a result of ribosome stalling.</text>
</comment>
<comment type="function">
    <text evidence="1">Catalyzes the release of premature peptidyl moieties from peptidyl-tRNA molecules trapped in stalled 50S ribosomal subunits, and thus maintains levels of free tRNAs and 50S ribosomes.</text>
</comment>
<comment type="catalytic activity">
    <reaction evidence="1">
        <text>an N-acyl-L-alpha-aminoacyl-tRNA + H2O = an N-acyl-L-amino acid + a tRNA + H(+)</text>
        <dbReference type="Rhea" id="RHEA:54448"/>
        <dbReference type="Rhea" id="RHEA-COMP:10123"/>
        <dbReference type="Rhea" id="RHEA-COMP:13883"/>
        <dbReference type="ChEBI" id="CHEBI:15377"/>
        <dbReference type="ChEBI" id="CHEBI:15378"/>
        <dbReference type="ChEBI" id="CHEBI:59874"/>
        <dbReference type="ChEBI" id="CHEBI:78442"/>
        <dbReference type="ChEBI" id="CHEBI:138191"/>
        <dbReference type="EC" id="3.1.1.29"/>
    </reaction>
</comment>
<comment type="subunit">
    <text evidence="1">Monomer.</text>
</comment>
<comment type="subcellular location">
    <subcellularLocation>
        <location evidence="1">Cytoplasm</location>
    </subcellularLocation>
</comment>
<comment type="similarity">
    <text evidence="1">Belongs to the PTH family.</text>
</comment>
<evidence type="ECO:0000255" key="1">
    <source>
        <dbReference type="HAMAP-Rule" id="MF_00083"/>
    </source>
</evidence>
<reference key="1">
    <citation type="submission" date="2008-06" db="EMBL/GenBank/DDBJ databases">
        <title>Complete sequence of Chlorobium phaeobacteroides BS1.</title>
        <authorList>
            <consortium name="US DOE Joint Genome Institute"/>
            <person name="Lucas S."/>
            <person name="Copeland A."/>
            <person name="Lapidus A."/>
            <person name="Glavina del Rio T."/>
            <person name="Dalin E."/>
            <person name="Tice H."/>
            <person name="Bruce D."/>
            <person name="Goodwin L."/>
            <person name="Pitluck S."/>
            <person name="Schmutz J."/>
            <person name="Larimer F."/>
            <person name="Land M."/>
            <person name="Hauser L."/>
            <person name="Kyrpides N."/>
            <person name="Ovchinnikova G."/>
            <person name="Li T."/>
            <person name="Liu Z."/>
            <person name="Zhao F."/>
            <person name="Overmann J."/>
            <person name="Bryant D.A."/>
            <person name="Richardson P."/>
        </authorList>
    </citation>
    <scope>NUCLEOTIDE SEQUENCE [LARGE SCALE GENOMIC DNA]</scope>
    <source>
        <strain>BS1</strain>
    </source>
</reference>
<keyword id="KW-0963">Cytoplasm</keyword>
<keyword id="KW-0378">Hydrolase</keyword>
<keyword id="KW-0694">RNA-binding</keyword>
<keyword id="KW-0820">tRNA-binding</keyword>
<name>PTH_CHLPB</name>
<sequence length="189" mass="20918">MKLIVGLGNPEKRHENTRHNIGFEVIDEMARLFQTGMTTGKGNFHHAKITHRGKGVIVLKPMTYMNLSGHAVVAAMNFYKIPVEEILVICDDLNIPLGSIRLRAKGSAGGQNGLKHIIQCLGREDFARLRVGIGRDHPSGSYSSFVLGKFSEEERKTADSIIPECAEAALDFVVHGIEHAMNRFNRKNA</sequence>
<gene>
    <name evidence="1" type="primary">pth</name>
    <name type="ordered locus">Cphamn1_1099</name>
</gene>
<protein>
    <recommendedName>
        <fullName evidence="1">Peptidyl-tRNA hydrolase</fullName>
        <shortName evidence="1">Pth</shortName>
        <ecNumber evidence="1">3.1.1.29</ecNumber>
    </recommendedName>
</protein>
<dbReference type="EC" id="3.1.1.29" evidence="1"/>
<dbReference type="EMBL" id="CP001101">
    <property type="protein sequence ID" value="ACE04037.1"/>
    <property type="molecule type" value="Genomic_DNA"/>
</dbReference>
<dbReference type="SMR" id="B3EQK4"/>
<dbReference type="STRING" id="331678.Cphamn1_1099"/>
<dbReference type="KEGG" id="cpb:Cphamn1_1099"/>
<dbReference type="eggNOG" id="COG0193">
    <property type="taxonomic scope" value="Bacteria"/>
</dbReference>
<dbReference type="HOGENOM" id="CLU_062456_4_1_10"/>
<dbReference type="OrthoDB" id="9800507at2"/>
<dbReference type="GO" id="GO:0005737">
    <property type="term" value="C:cytoplasm"/>
    <property type="evidence" value="ECO:0007669"/>
    <property type="project" value="UniProtKB-SubCell"/>
</dbReference>
<dbReference type="GO" id="GO:0004045">
    <property type="term" value="F:peptidyl-tRNA hydrolase activity"/>
    <property type="evidence" value="ECO:0007669"/>
    <property type="project" value="UniProtKB-UniRule"/>
</dbReference>
<dbReference type="GO" id="GO:0000049">
    <property type="term" value="F:tRNA binding"/>
    <property type="evidence" value="ECO:0007669"/>
    <property type="project" value="UniProtKB-UniRule"/>
</dbReference>
<dbReference type="GO" id="GO:0006515">
    <property type="term" value="P:protein quality control for misfolded or incompletely synthesized proteins"/>
    <property type="evidence" value="ECO:0007669"/>
    <property type="project" value="UniProtKB-UniRule"/>
</dbReference>
<dbReference type="GO" id="GO:0072344">
    <property type="term" value="P:rescue of stalled ribosome"/>
    <property type="evidence" value="ECO:0007669"/>
    <property type="project" value="UniProtKB-UniRule"/>
</dbReference>
<dbReference type="CDD" id="cd00462">
    <property type="entry name" value="PTH"/>
    <property type="match status" value="1"/>
</dbReference>
<dbReference type="FunFam" id="3.40.50.1470:FF:000001">
    <property type="entry name" value="Peptidyl-tRNA hydrolase"/>
    <property type="match status" value="1"/>
</dbReference>
<dbReference type="Gene3D" id="3.40.50.1470">
    <property type="entry name" value="Peptidyl-tRNA hydrolase"/>
    <property type="match status" value="1"/>
</dbReference>
<dbReference type="HAMAP" id="MF_00083">
    <property type="entry name" value="Pept_tRNA_hydro_bact"/>
    <property type="match status" value="1"/>
</dbReference>
<dbReference type="InterPro" id="IPR001328">
    <property type="entry name" value="Pept_tRNA_hydro"/>
</dbReference>
<dbReference type="InterPro" id="IPR018171">
    <property type="entry name" value="Pept_tRNA_hydro_CS"/>
</dbReference>
<dbReference type="InterPro" id="IPR036416">
    <property type="entry name" value="Pept_tRNA_hydro_sf"/>
</dbReference>
<dbReference type="NCBIfam" id="TIGR00447">
    <property type="entry name" value="pth"/>
    <property type="match status" value="1"/>
</dbReference>
<dbReference type="PANTHER" id="PTHR17224">
    <property type="entry name" value="PEPTIDYL-TRNA HYDROLASE"/>
    <property type="match status" value="1"/>
</dbReference>
<dbReference type="PANTHER" id="PTHR17224:SF1">
    <property type="entry name" value="PEPTIDYL-TRNA HYDROLASE"/>
    <property type="match status" value="1"/>
</dbReference>
<dbReference type="Pfam" id="PF01195">
    <property type="entry name" value="Pept_tRNA_hydro"/>
    <property type="match status" value="1"/>
</dbReference>
<dbReference type="SUPFAM" id="SSF53178">
    <property type="entry name" value="Peptidyl-tRNA hydrolase-like"/>
    <property type="match status" value="1"/>
</dbReference>
<dbReference type="PROSITE" id="PS01195">
    <property type="entry name" value="PEPT_TRNA_HYDROL_1"/>
    <property type="match status" value="1"/>
</dbReference>
<organism>
    <name type="scientific">Chlorobium phaeobacteroides (strain BS1)</name>
    <dbReference type="NCBI Taxonomy" id="331678"/>
    <lineage>
        <taxon>Bacteria</taxon>
        <taxon>Pseudomonadati</taxon>
        <taxon>Chlorobiota</taxon>
        <taxon>Chlorobiia</taxon>
        <taxon>Chlorobiales</taxon>
        <taxon>Chlorobiaceae</taxon>
        <taxon>Chlorobium/Pelodictyon group</taxon>
        <taxon>Chlorobium</taxon>
    </lineage>
</organism>
<accession>B3EQK4</accession>
<proteinExistence type="inferred from homology"/>
<feature type="chain" id="PRO_1000092924" description="Peptidyl-tRNA hydrolase">
    <location>
        <begin position="1"/>
        <end position="189"/>
    </location>
</feature>
<feature type="active site" description="Proton acceptor" evidence="1">
    <location>
        <position position="19"/>
    </location>
</feature>
<feature type="binding site" evidence="1">
    <location>
        <position position="14"/>
    </location>
    <ligand>
        <name>tRNA</name>
        <dbReference type="ChEBI" id="CHEBI:17843"/>
    </ligand>
</feature>
<feature type="binding site" evidence="1">
    <location>
        <position position="64"/>
    </location>
    <ligand>
        <name>tRNA</name>
        <dbReference type="ChEBI" id="CHEBI:17843"/>
    </ligand>
</feature>
<feature type="binding site" evidence="1">
    <location>
        <position position="66"/>
    </location>
    <ligand>
        <name>tRNA</name>
        <dbReference type="ChEBI" id="CHEBI:17843"/>
    </ligand>
</feature>
<feature type="binding site" evidence="1">
    <location>
        <position position="112"/>
    </location>
    <ligand>
        <name>tRNA</name>
        <dbReference type="ChEBI" id="CHEBI:17843"/>
    </ligand>
</feature>
<feature type="site" description="Discriminates between blocked and unblocked aminoacyl-tRNA" evidence="1">
    <location>
        <position position="9"/>
    </location>
</feature>
<feature type="site" description="Stabilizes the basic form of H active site to accept a proton" evidence="1">
    <location>
        <position position="91"/>
    </location>
</feature>